<accession>A1TND3</accession>
<reference key="1">
    <citation type="submission" date="2006-12" db="EMBL/GenBank/DDBJ databases">
        <title>Complete sequence of Acidovorax avenae subsp. citrulli AAC00-1.</title>
        <authorList>
            <person name="Copeland A."/>
            <person name="Lucas S."/>
            <person name="Lapidus A."/>
            <person name="Barry K."/>
            <person name="Detter J.C."/>
            <person name="Glavina del Rio T."/>
            <person name="Dalin E."/>
            <person name="Tice H."/>
            <person name="Pitluck S."/>
            <person name="Kiss H."/>
            <person name="Brettin T."/>
            <person name="Bruce D."/>
            <person name="Han C."/>
            <person name="Tapia R."/>
            <person name="Gilna P."/>
            <person name="Schmutz J."/>
            <person name="Larimer F."/>
            <person name="Land M."/>
            <person name="Hauser L."/>
            <person name="Kyrpides N."/>
            <person name="Kim E."/>
            <person name="Stahl D."/>
            <person name="Richardson P."/>
        </authorList>
    </citation>
    <scope>NUCLEOTIDE SEQUENCE [LARGE SCALE GENOMIC DNA]</scope>
    <source>
        <strain>AAC00-1</strain>
    </source>
</reference>
<protein>
    <recommendedName>
        <fullName evidence="1">Large ribosomal subunit protein bL19</fullName>
    </recommendedName>
    <alternativeName>
        <fullName evidence="2">50S ribosomal protein L19</fullName>
    </alternativeName>
</protein>
<evidence type="ECO:0000255" key="1">
    <source>
        <dbReference type="HAMAP-Rule" id="MF_00402"/>
    </source>
</evidence>
<evidence type="ECO:0000305" key="2"/>
<feature type="chain" id="PRO_1000049623" description="Large ribosomal subunit protein bL19">
    <location>
        <begin position="1"/>
        <end position="128"/>
    </location>
</feature>
<gene>
    <name evidence="1" type="primary">rplS</name>
    <name type="ordered locus">Aave_1887</name>
</gene>
<proteinExistence type="inferred from homology"/>
<name>RL19_PARC0</name>
<dbReference type="EMBL" id="CP000512">
    <property type="protein sequence ID" value="ABM32471.1"/>
    <property type="molecule type" value="Genomic_DNA"/>
</dbReference>
<dbReference type="RefSeq" id="WP_011795016.1">
    <property type="nucleotide sequence ID" value="NC_008752.1"/>
</dbReference>
<dbReference type="SMR" id="A1TND3"/>
<dbReference type="STRING" id="397945.Aave_1887"/>
<dbReference type="GeneID" id="79791706"/>
<dbReference type="KEGG" id="aav:Aave_1887"/>
<dbReference type="eggNOG" id="COG0335">
    <property type="taxonomic scope" value="Bacteria"/>
</dbReference>
<dbReference type="HOGENOM" id="CLU_103507_1_0_4"/>
<dbReference type="OrthoDB" id="9803541at2"/>
<dbReference type="Proteomes" id="UP000002596">
    <property type="component" value="Chromosome"/>
</dbReference>
<dbReference type="GO" id="GO:0022625">
    <property type="term" value="C:cytosolic large ribosomal subunit"/>
    <property type="evidence" value="ECO:0007669"/>
    <property type="project" value="TreeGrafter"/>
</dbReference>
<dbReference type="GO" id="GO:0003735">
    <property type="term" value="F:structural constituent of ribosome"/>
    <property type="evidence" value="ECO:0007669"/>
    <property type="project" value="InterPro"/>
</dbReference>
<dbReference type="GO" id="GO:0006412">
    <property type="term" value="P:translation"/>
    <property type="evidence" value="ECO:0007669"/>
    <property type="project" value="UniProtKB-UniRule"/>
</dbReference>
<dbReference type="FunFam" id="2.30.30.790:FF:000001">
    <property type="entry name" value="50S ribosomal protein L19"/>
    <property type="match status" value="1"/>
</dbReference>
<dbReference type="Gene3D" id="2.30.30.790">
    <property type="match status" value="1"/>
</dbReference>
<dbReference type="HAMAP" id="MF_00402">
    <property type="entry name" value="Ribosomal_bL19"/>
    <property type="match status" value="1"/>
</dbReference>
<dbReference type="InterPro" id="IPR001857">
    <property type="entry name" value="Ribosomal_bL19"/>
</dbReference>
<dbReference type="InterPro" id="IPR018257">
    <property type="entry name" value="Ribosomal_bL19_CS"/>
</dbReference>
<dbReference type="InterPro" id="IPR038657">
    <property type="entry name" value="Ribosomal_bL19_sf"/>
</dbReference>
<dbReference type="InterPro" id="IPR008991">
    <property type="entry name" value="Translation_prot_SH3-like_sf"/>
</dbReference>
<dbReference type="NCBIfam" id="TIGR01024">
    <property type="entry name" value="rplS_bact"/>
    <property type="match status" value="1"/>
</dbReference>
<dbReference type="PANTHER" id="PTHR15680:SF9">
    <property type="entry name" value="LARGE RIBOSOMAL SUBUNIT PROTEIN BL19M"/>
    <property type="match status" value="1"/>
</dbReference>
<dbReference type="PANTHER" id="PTHR15680">
    <property type="entry name" value="RIBOSOMAL PROTEIN L19"/>
    <property type="match status" value="1"/>
</dbReference>
<dbReference type="Pfam" id="PF01245">
    <property type="entry name" value="Ribosomal_L19"/>
    <property type="match status" value="1"/>
</dbReference>
<dbReference type="PIRSF" id="PIRSF002191">
    <property type="entry name" value="Ribosomal_L19"/>
    <property type="match status" value="1"/>
</dbReference>
<dbReference type="PRINTS" id="PR00061">
    <property type="entry name" value="RIBOSOMALL19"/>
</dbReference>
<dbReference type="SUPFAM" id="SSF50104">
    <property type="entry name" value="Translation proteins SH3-like domain"/>
    <property type="match status" value="1"/>
</dbReference>
<dbReference type="PROSITE" id="PS01015">
    <property type="entry name" value="RIBOSOMAL_L19"/>
    <property type="match status" value="1"/>
</dbReference>
<organism>
    <name type="scientific">Paracidovorax citrulli (strain AAC00-1)</name>
    <name type="common">Acidovorax citrulli</name>
    <dbReference type="NCBI Taxonomy" id="397945"/>
    <lineage>
        <taxon>Bacteria</taxon>
        <taxon>Pseudomonadati</taxon>
        <taxon>Pseudomonadota</taxon>
        <taxon>Betaproteobacteria</taxon>
        <taxon>Burkholderiales</taxon>
        <taxon>Comamonadaceae</taxon>
        <taxon>Paracidovorax</taxon>
    </lineage>
</organism>
<comment type="function">
    <text evidence="1">This protein is located at the 30S-50S ribosomal subunit interface and may play a role in the structure and function of the aminoacyl-tRNA binding site.</text>
</comment>
<comment type="similarity">
    <text evidence="1">Belongs to the bacterial ribosomal protein bL19 family.</text>
</comment>
<sequence>MNLIQTLEQEEIARLNKTIPEFAPGDTVIVSVNVVEGNRKRVQAYEGVVIAKRNRGLNSGFTVRKISSGEGVERTFQTYSPLIASIEVKRRGDVRRAKLYYLRDRSGKSARIKEKLPSRVNKAAATAA</sequence>
<keyword id="KW-0687">Ribonucleoprotein</keyword>
<keyword id="KW-0689">Ribosomal protein</keyword>